<comment type="function">
    <text evidence="3 8 11">Symporter that cotransports neutral amino acids and sodium ions from the extracellular to the intracellular side of the cell membrane (PubMed:34406367). The transport is pH-sensitive, Li(+)-intolerant, electrogenic, driven by the Na(+) electrochemical gradient and cotransports of neutral amino acids and sodium ions with a stoichiometry of 1:1. May function in the transport of amino acids at the blood-brain barrier (By similarity). May function in the transport of amino acids in the supply of maternal nutrients to the fetus through the placenta (PubMed:16365304). Maintains a key metabolic glutamine/glutamate balance underpinning retrograde signaling by dendritic release of the neurotransmitter glutamate (By similarity). Transports L-proline in differentiating osteoblasts for the efficient synthesis of proline-enriched proteins and provides proline essential for osteoblast differentiation and bone formation during bone development (PubMed:34406367).</text>
</comment>
<comment type="catalytic activity">
    <reaction evidence="3">
        <text>L-alanine(in) + Na(+)(in) = L-alanine(out) + Na(+)(out)</text>
        <dbReference type="Rhea" id="RHEA:29283"/>
        <dbReference type="ChEBI" id="CHEBI:29101"/>
        <dbReference type="ChEBI" id="CHEBI:57972"/>
    </reaction>
    <physiologicalReaction direction="right-to-left" evidence="3">
        <dbReference type="Rhea" id="RHEA:29285"/>
    </physiologicalReaction>
</comment>
<comment type="catalytic activity">
    <reaction evidence="3">
        <text>glycine(in) + Na(+)(in) = glycine(out) + Na(+)(out)</text>
        <dbReference type="Rhea" id="RHEA:68228"/>
        <dbReference type="ChEBI" id="CHEBI:29101"/>
        <dbReference type="ChEBI" id="CHEBI:57305"/>
    </reaction>
    <physiologicalReaction direction="right-to-left" evidence="3">
        <dbReference type="Rhea" id="RHEA:68230"/>
    </physiologicalReaction>
</comment>
<comment type="catalytic activity">
    <reaction evidence="3">
        <text>L-serine(in) + Na(+)(in) = L-serine(out) + Na(+)(out)</text>
        <dbReference type="Rhea" id="RHEA:29575"/>
        <dbReference type="ChEBI" id="CHEBI:29101"/>
        <dbReference type="ChEBI" id="CHEBI:33384"/>
    </reaction>
    <physiologicalReaction direction="right-to-left" evidence="3">
        <dbReference type="Rhea" id="RHEA:29577"/>
    </physiologicalReaction>
</comment>
<comment type="catalytic activity">
    <reaction evidence="3">
        <text>L-proline(in) + Na(+)(in) = L-proline(out) + Na(+)(out)</text>
        <dbReference type="Rhea" id="RHEA:28967"/>
        <dbReference type="ChEBI" id="CHEBI:29101"/>
        <dbReference type="ChEBI" id="CHEBI:60039"/>
    </reaction>
    <physiologicalReaction direction="right-to-left" evidence="3">
        <dbReference type="Rhea" id="RHEA:28969"/>
    </physiologicalReaction>
</comment>
<comment type="catalytic activity">
    <reaction evidence="3">
        <text>L-methionine(in) + Na(+)(in) = L-methionine(out) + Na(+)(out)</text>
        <dbReference type="Rhea" id="RHEA:68240"/>
        <dbReference type="ChEBI" id="CHEBI:29101"/>
        <dbReference type="ChEBI" id="CHEBI:57844"/>
    </reaction>
    <physiologicalReaction direction="right-to-left" evidence="3">
        <dbReference type="Rhea" id="RHEA:68242"/>
    </physiologicalReaction>
</comment>
<comment type="catalytic activity">
    <reaction evidence="3">
        <text>L-histidine(in) + Na(+)(in) = L-histidine(out) + Na(+)(out)</text>
        <dbReference type="Rhea" id="RHEA:71583"/>
        <dbReference type="ChEBI" id="CHEBI:29101"/>
        <dbReference type="ChEBI" id="CHEBI:57595"/>
    </reaction>
    <physiologicalReaction direction="right-to-left" evidence="3">
        <dbReference type="Rhea" id="RHEA:71585"/>
    </physiologicalReaction>
</comment>
<comment type="catalytic activity">
    <reaction evidence="3">
        <text>L-asparagine(in) + Na(+)(in) = L-asparagine(out) + Na(+)(out)</text>
        <dbReference type="Rhea" id="RHEA:71383"/>
        <dbReference type="ChEBI" id="CHEBI:29101"/>
        <dbReference type="ChEBI" id="CHEBI:58048"/>
    </reaction>
    <physiologicalReaction direction="right-to-left" evidence="3">
        <dbReference type="Rhea" id="RHEA:71385"/>
    </physiologicalReaction>
</comment>
<comment type="catalytic activity">
    <reaction evidence="3">
        <text>L-glutamine(in) + Na(+)(in) = L-glutamine(out) + Na(+)(out)</text>
        <dbReference type="Rhea" id="RHEA:68236"/>
        <dbReference type="ChEBI" id="CHEBI:29101"/>
        <dbReference type="ChEBI" id="CHEBI:58359"/>
    </reaction>
    <physiologicalReaction direction="right-to-left" evidence="3">
        <dbReference type="Rhea" id="RHEA:68238"/>
    </physiologicalReaction>
</comment>
<comment type="catalytic activity">
    <reaction evidence="3">
        <text>L-threonine(in) + Na(+)(in) = L-threonine(out) + Na(+)(out)</text>
        <dbReference type="Rhea" id="RHEA:69999"/>
        <dbReference type="ChEBI" id="CHEBI:29101"/>
        <dbReference type="ChEBI" id="CHEBI:57926"/>
    </reaction>
    <physiologicalReaction direction="right-to-left" evidence="3">
        <dbReference type="Rhea" id="RHEA:70001"/>
    </physiologicalReaction>
</comment>
<comment type="catalytic activity">
    <reaction evidence="3">
        <text>L-leucine(in) + Na(+)(in) = L-leucine(out) + Na(+)(out)</text>
        <dbReference type="Rhea" id="RHEA:29263"/>
        <dbReference type="ChEBI" id="CHEBI:29101"/>
        <dbReference type="ChEBI" id="CHEBI:57427"/>
    </reaction>
    <physiologicalReaction direction="right-to-left" evidence="3">
        <dbReference type="Rhea" id="RHEA:29265"/>
    </physiologicalReaction>
</comment>
<comment type="catalytic activity">
    <reaction evidence="3">
        <text>L-phenylalanine(in) + Na(+)(in) = L-phenylalanine(out) + Na(+)(out)</text>
        <dbReference type="Rhea" id="RHEA:68244"/>
        <dbReference type="ChEBI" id="CHEBI:29101"/>
        <dbReference type="ChEBI" id="CHEBI:58095"/>
    </reaction>
    <physiologicalReaction direction="right-to-left" evidence="3">
        <dbReference type="Rhea" id="RHEA:68246"/>
    </physiologicalReaction>
</comment>
<comment type="activity regulation">
    <text evidence="3">Inhibited by N-methyl-D-glucamine. Inhibited by choline. Allosteric regulation of sodium ions binding by pH.</text>
</comment>
<comment type="subcellular location">
    <subcellularLocation>
        <location evidence="9 10">Cell membrane</location>
        <topology evidence="3">Multi-pass membrane protein</topology>
    </subcellularLocation>
    <text evidence="1 3 10">Insulin promotes recruitment to the plasma membrane from a pool localized in the trans-Golgi network or endosomes (PubMed:17050538). Enriched in the somatodendritic compartment of neurons, it is also detected at the axonal shaft but excluded from the nerve terminal (By similarity).</text>
</comment>
<comment type="tissue specificity">
    <text evidence="7">Expressed in cerebral and cerebellar astrocytes and neurons.</text>
</comment>
<comment type="domain">
    <text evidence="3">The extracellular C-terminal domain controls the voltage dependence for amino acid transports activity.</text>
</comment>
<comment type="PTM">
    <text evidence="9">Polyubiquitination by NEDD4L regulates the degradation and the activity of SLC38A2.</text>
</comment>
<comment type="disruption phenotype">
    <text evidence="11">Placenta-specific Slc38a2 knockdown reduced fetal weight by 11% at the end of gestation.</text>
</comment>
<comment type="similarity">
    <text evidence="12">Belongs to the amino acid/polyamine transporter 2 family.</text>
</comment>
<comment type="sequence caution" evidence="12">
    <conflict type="erroneous initiation">
        <sequence resource="EMBL-CDS" id="BAC98152"/>
    </conflict>
    <text>Extended N-terminus.</text>
</comment>
<keyword id="KW-0029">Amino-acid transport</keyword>
<keyword id="KW-1003">Cell membrane</keyword>
<keyword id="KW-1015">Disulfide bond</keyword>
<keyword id="KW-0325">Glycoprotein</keyword>
<keyword id="KW-0406">Ion transport</keyword>
<keyword id="KW-0472">Membrane</keyword>
<keyword id="KW-0597">Phosphoprotein</keyword>
<keyword id="KW-1185">Reference proteome</keyword>
<keyword id="KW-0915">Sodium</keyword>
<keyword id="KW-0739">Sodium transport</keyword>
<keyword id="KW-0769">Symport</keyword>
<keyword id="KW-0812">Transmembrane</keyword>
<keyword id="KW-1133">Transmembrane helix</keyword>
<keyword id="KW-0813">Transport</keyword>
<keyword id="KW-0832">Ubl conjugation</keyword>
<accession>Q8CFE6</accession>
<accession>Q3TEX3</accession>
<accession>Q6PFR1</accession>
<accession>Q6ZPS7</accession>
<accession>Q810U9</accession>
<accession>Q8CC66</accession>
<accession>Q8CD21</accession>
<evidence type="ECO:0000250" key="1"/>
<evidence type="ECO:0000250" key="2">
    <source>
        <dbReference type="UniProtKB" id="Q96QD8"/>
    </source>
</evidence>
<evidence type="ECO:0000250" key="3">
    <source>
        <dbReference type="UniProtKB" id="Q9JHE5"/>
    </source>
</evidence>
<evidence type="ECO:0000255" key="4"/>
<evidence type="ECO:0000255" key="5">
    <source>
        <dbReference type="PROSITE-ProRule" id="PRU00114"/>
    </source>
</evidence>
<evidence type="ECO:0000256" key="6">
    <source>
        <dbReference type="SAM" id="MobiDB-lite"/>
    </source>
</evidence>
<evidence type="ECO:0000269" key="7">
    <source>
    </source>
</evidence>
<evidence type="ECO:0000269" key="8">
    <source>
    </source>
</evidence>
<evidence type="ECO:0000269" key="9">
    <source>
    </source>
</evidence>
<evidence type="ECO:0000269" key="10">
    <source>
    </source>
</evidence>
<evidence type="ECO:0000269" key="11">
    <source>
    </source>
</evidence>
<evidence type="ECO:0000305" key="12"/>
<evidence type="ECO:0000312" key="13">
    <source>
        <dbReference type="MGI" id="MGI:1915010"/>
    </source>
</evidence>
<evidence type="ECO:0007744" key="14">
    <source>
    </source>
</evidence>
<evidence type="ECO:0007744" key="15">
    <source>
    </source>
</evidence>
<reference key="1">
    <citation type="journal article" date="2003" name="DNA Res.">
        <title>Prediction of the coding sequences of mouse homologues of KIAA gene: III. The complete nucleotide sequences of 500 mouse KIAA-homologous cDNAs identified by screening of terminal sequences of cDNA clones randomly sampled from size-fractionated libraries.</title>
        <authorList>
            <person name="Okazaki N."/>
            <person name="Kikuno R."/>
            <person name="Ohara R."/>
            <person name="Inamoto S."/>
            <person name="Koseki H."/>
            <person name="Hiraoka S."/>
            <person name="Saga Y."/>
            <person name="Nagase T."/>
            <person name="Ohara O."/>
            <person name="Koga H."/>
        </authorList>
    </citation>
    <scope>NUCLEOTIDE SEQUENCE [LARGE SCALE MRNA]</scope>
    <source>
        <tissue>Embryonic tail</tissue>
    </source>
</reference>
<reference key="2">
    <citation type="journal article" date="2005" name="Science">
        <title>The transcriptional landscape of the mammalian genome.</title>
        <authorList>
            <person name="Carninci P."/>
            <person name="Kasukawa T."/>
            <person name="Katayama S."/>
            <person name="Gough J."/>
            <person name="Frith M.C."/>
            <person name="Maeda N."/>
            <person name="Oyama R."/>
            <person name="Ravasi T."/>
            <person name="Lenhard B."/>
            <person name="Wells C."/>
            <person name="Kodzius R."/>
            <person name="Shimokawa K."/>
            <person name="Bajic V.B."/>
            <person name="Brenner S.E."/>
            <person name="Batalov S."/>
            <person name="Forrest A.R."/>
            <person name="Zavolan M."/>
            <person name="Davis M.J."/>
            <person name="Wilming L.G."/>
            <person name="Aidinis V."/>
            <person name="Allen J.E."/>
            <person name="Ambesi-Impiombato A."/>
            <person name="Apweiler R."/>
            <person name="Aturaliya R.N."/>
            <person name="Bailey T.L."/>
            <person name="Bansal M."/>
            <person name="Baxter L."/>
            <person name="Beisel K.W."/>
            <person name="Bersano T."/>
            <person name="Bono H."/>
            <person name="Chalk A.M."/>
            <person name="Chiu K.P."/>
            <person name="Choudhary V."/>
            <person name="Christoffels A."/>
            <person name="Clutterbuck D.R."/>
            <person name="Crowe M.L."/>
            <person name="Dalla E."/>
            <person name="Dalrymple B.P."/>
            <person name="de Bono B."/>
            <person name="Della Gatta G."/>
            <person name="di Bernardo D."/>
            <person name="Down T."/>
            <person name="Engstrom P."/>
            <person name="Fagiolini M."/>
            <person name="Faulkner G."/>
            <person name="Fletcher C.F."/>
            <person name="Fukushima T."/>
            <person name="Furuno M."/>
            <person name="Futaki S."/>
            <person name="Gariboldi M."/>
            <person name="Georgii-Hemming P."/>
            <person name="Gingeras T.R."/>
            <person name="Gojobori T."/>
            <person name="Green R.E."/>
            <person name="Gustincich S."/>
            <person name="Harbers M."/>
            <person name="Hayashi Y."/>
            <person name="Hensch T.K."/>
            <person name="Hirokawa N."/>
            <person name="Hill D."/>
            <person name="Huminiecki L."/>
            <person name="Iacono M."/>
            <person name="Ikeo K."/>
            <person name="Iwama A."/>
            <person name="Ishikawa T."/>
            <person name="Jakt M."/>
            <person name="Kanapin A."/>
            <person name="Katoh M."/>
            <person name="Kawasawa Y."/>
            <person name="Kelso J."/>
            <person name="Kitamura H."/>
            <person name="Kitano H."/>
            <person name="Kollias G."/>
            <person name="Krishnan S.P."/>
            <person name="Kruger A."/>
            <person name="Kummerfeld S.K."/>
            <person name="Kurochkin I.V."/>
            <person name="Lareau L.F."/>
            <person name="Lazarevic D."/>
            <person name="Lipovich L."/>
            <person name="Liu J."/>
            <person name="Liuni S."/>
            <person name="McWilliam S."/>
            <person name="Madan Babu M."/>
            <person name="Madera M."/>
            <person name="Marchionni L."/>
            <person name="Matsuda H."/>
            <person name="Matsuzawa S."/>
            <person name="Miki H."/>
            <person name="Mignone F."/>
            <person name="Miyake S."/>
            <person name="Morris K."/>
            <person name="Mottagui-Tabar S."/>
            <person name="Mulder N."/>
            <person name="Nakano N."/>
            <person name="Nakauchi H."/>
            <person name="Ng P."/>
            <person name="Nilsson R."/>
            <person name="Nishiguchi S."/>
            <person name="Nishikawa S."/>
            <person name="Nori F."/>
            <person name="Ohara O."/>
            <person name="Okazaki Y."/>
            <person name="Orlando V."/>
            <person name="Pang K.C."/>
            <person name="Pavan W.J."/>
            <person name="Pavesi G."/>
            <person name="Pesole G."/>
            <person name="Petrovsky N."/>
            <person name="Piazza S."/>
            <person name="Reed J."/>
            <person name="Reid J.F."/>
            <person name="Ring B.Z."/>
            <person name="Ringwald M."/>
            <person name="Rost B."/>
            <person name="Ruan Y."/>
            <person name="Salzberg S.L."/>
            <person name="Sandelin A."/>
            <person name="Schneider C."/>
            <person name="Schoenbach C."/>
            <person name="Sekiguchi K."/>
            <person name="Semple C.A."/>
            <person name="Seno S."/>
            <person name="Sessa L."/>
            <person name="Sheng Y."/>
            <person name="Shibata Y."/>
            <person name="Shimada H."/>
            <person name="Shimada K."/>
            <person name="Silva D."/>
            <person name="Sinclair B."/>
            <person name="Sperling S."/>
            <person name="Stupka E."/>
            <person name="Sugiura K."/>
            <person name="Sultana R."/>
            <person name="Takenaka Y."/>
            <person name="Taki K."/>
            <person name="Tammoja K."/>
            <person name="Tan S.L."/>
            <person name="Tang S."/>
            <person name="Taylor M.S."/>
            <person name="Tegner J."/>
            <person name="Teichmann S.A."/>
            <person name="Ueda H.R."/>
            <person name="van Nimwegen E."/>
            <person name="Verardo R."/>
            <person name="Wei C.L."/>
            <person name="Yagi K."/>
            <person name="Yamanishi H."/>
            <person name="Zabarovsky E."/>
            <person name="Zhu S."/>
            <person name="Zimmer A."/>
            <person name="Hide W."/>
            <person name="Bult C."/>
            <person name="Grimmond S.M."/>
            <person name="Teasdale R.D."/>
            <person name="Liu E.T."/>
            <person name="Brusic V."/>
            <person name="Quackenbush J."/>
            <person name="Wahlestedt C."/>
            <person name="Mattick J.S."/>
            <person name="Hume D.A."/>
            <person name="Kai C."/>
            <person name="Sasaki D."/>
            <person name="Tomaru Y."/>
            <person name="Fukuda S."/>
            <person name="Kanamori-Katayama M."/>
            <person name="Suzuki M."/>
            <person name="Aoki J."/>
            <person name="Arakawa T."/>
            <person name="Iida J."/>
            <person name="Imamura K."/>
            <person name="Itoh M."/>
            <person name="Kato T."/>
            <person name="Kawaji H."/>
            <person name="Kawagashira N."/>
            <person name="Kawashima T."/>
            <person name="Kojima M."/>
            <person name="Kondo S."/>
            <person name="Konno H."/>
            <person name="Nakano K."/>
            <person name="Ninomiya N."/>
            <person name="Nishio T."/>
            <person name="Okada M."/>
            <person name="Plessy C."/>
            <person name="Shibata K."/>
            <person name="Shiraki T."/>
            <person name="Suzuki S."/>
            <person name="Tagami M."/>
            <person name="Waki K."/>
            <person name="Watahiki A."/>
            <person name="Okamura-Oho Y."/>
            <person name="Suzuki H."/>
            <person name="Kawai J."/>
            <person name="Hayashizaki Y."/>
        </authorList>
    </citation>
    <scope>NUCLEOTIDE SEQUENCE [LARGE SCALE MRNA]</scope>
    <source>
        <strain>C57BL/6J</strain>
        <tissue>Epididymis</tissue>
        <tissue>Kidney</tissue>
        <tissue>Testis</tissue>
    </source>
</reference>
<reference key="3">
    <citation type="journal article" date="2004" name="Genome Res.">
        <title>The status, quality, and expansion of the NIH full-length cDNA project: the Mammalian Gene Collection (MGC).</title>
        <authorList>
            <consortium name="The MGC Project Team"/>
        </authorList>
    </citation>
    <scope>NUCLEOTIDE SEQUENCE [LARGE SCALE MRNA]</scope>
    <source>
        <strain>C57BL/6J</strain>
        <strain>Czech II</strain>
        <tissue>Brain</tissue>
        <tissue>Mammary tumor</tissue>
    </source>
</reference>
<reference key="4">
    <citation type="journal article" date="2004" name="Neurochem. Int.">
        <title>Glutamine uptake and expression of mRNA's of glutamine transporting proteins in mouse cerebellar and cerebral cortical astrocytes and neurons.</title>
        <authorList>
            <person name="Dolinska M."/>
            <person name="Zablocka B."/>
            <person name="Sonnewald U."/>
            <person name="Albrecht J."/>
        </authorList>
    </citation>
    <scope>TISSUE SPECIFICITY</scope>
</reference>
<reference key="5">
    <citation type="journal article" date="2005" name="Proc. Natl. Acad. Sci. U.S.A.">
        <title>Adaptation of nutrient supply to fetal demand in the mouse involves interaction between the Igf2 gene and placental transporter systems.</title>
        <authorList>
            <person name="Constancia M."/>
            <person name="Angiolini E."/>
            <person name="Sandovici I."/>
            <person name="Smith P."/>
            <person name="Smith R."/>
            <person name="Kelsey G."/>
            <person name="Dean W."/>
            <person name="Ferguson-Smith A."/>
            <person name="Sibley C.P."/>
            <person name="Reik W."/>
            <person name="Fowden A."/>
        </authorList>
    </citation>
    <scope>FUNCTION</scope>
</reference>
<reference key="6">
    <citation type="journal article" date="2006" name="J. Biol. Chem.">
        <title>Regulation of amino acid transporter ATA2 by ubiquitin ligase Nedd4-2.</title>
        <authorList>
            <person name="Hatanaka T."/>
            <person name="Hatanaka Y."/>
            <person name="Setou M."/>
        </authorList>
    </citation>
    <scope>SUBCELLULAR LOCATION</scope>
    <scope>UBIQUITINATION BY NEDD4L</scope>
</reference>
<reference key="7">
    <citation type="journal article" date="2006" name="J. Biol. Chem.">
        <title>Amino acid transporter ATA2 is stored at the trans-Golgi network and released by insulin stimulus in adipocytes.</title>
        <authorList>
            <person name="Hatanaka T."/>
            <person name="Hatanaka Y."/>
            <person name="Tsuchida J."/>
            <person name="Ganapathy V."/>
            <person name="Setou M."/>
        </authorList>
    </citation>
    <scope>SUBCELLULAR LOCATION</scope>
</reference>
<reference key="8">
    <citation type="journal article" date="2008" name="J. Proteome Res.">
        <title>Large-scale identification and evolution indexing of tyrosine phosphorylation sites from murine brain.</title>
        <authorList>
            <person name="Ballif B.A."/>
            <person name="Carey G.R."/>
            <person name="Sunyaev S.R."/>
            <person name="Gygi S.P."/>
        </authorList>
    </citation>
    <scope>IDENTIFICATION BY MASS SPECTROMETRY [LARGE SCALE ANALYSIS]</scope>
    <source>
        <tissue>Brain</tissue>
    </source>
</reference>
<reference key="9">
    <citation type="journal article" date="2009" name="Immunity">
        <title>The phagosomal proteome in interferon-gamma-activated macrophages.</title>
        <authorList>
            <person name="Trost M."/>
            <person name="English L."/>
            <person name="Lemieux S."/>
            <person name="Courcelles M."/>
            <person name="Desjardins M."/>
            <person name="Thibault P."/>
        </authorList>
    </citation>
    <scope>PHOSPHORYLATION [LARGE SCALE ANALYSIS] AT SER-55</scope>
    <scope>IDENTIFICATION BY MASS SPECTROMETRY [LARGE SCALE ANALYSIS]</scope>
</reference>
<reference key="10">
    <citation type="journal article" date="2009" name="Mol. Cell. Proteomics">
        <title>Large scale localization of protein phosphorylation by use of electron capture dissociation mass spectrometry.</title>
        <authorList>
            <person name="Sweet S.M."/>
            <person name="Bailey C.M."/>
            <person name="Cunningham D.L."/>
            <person name="Heath J.K."/>
            <person name="Cooper H.J."/>
        </authorList>
    </citation>
    <scope>IDENTIFICATION BY MASS SPECTROMETRY [LARGE SCALE ANALYSIS]</scope>
    <source>
        <tissue>Embryonic fibroblast</tissue>
    </source>
</reference>
<reference key="11">
    <citation type="journal article" date="2010" name="Cell">
        <title>A tissue-specific atlas of mouse protein phosphorylation and expression.</title>
        <authorList>
            <person name="Huttlin E.L."/>
            <person name="Jedrychowski M.P."/>
            <person name="Elias J.E."/>
            <person name="Goswami T."/>
            <person name="Rad R."/>
            <person name="Beausoleil S.A."/>
            <person name="Villen J."/>
            <person name="Haas W."/>
            <person name="Sowa M.E."/>
            <person name="Gygi S.P."/>
        </authorList>
    </citation>
    <scope>PHOSPHORYLATION [LARGE SCALE ANALYSIS] AT SER-21</scope>
    <scope>IDENTIFICATION BY MASS SPECTROMETRY [LARGE SCALE ANALYSIS]</scope>
    <source>
        <tissue>Pancreas</tissue>
        <tissue>Spleen</tissue>
    </source>
</reference>
<reference key="12">
    <citation type="journal article" date="2021" name="Clin. Sci.">
        <title>Placenta-specific Slc38a2/SNAT2 knockdown causes fetal growth restriction in mice.</title>
        <authorList>
            <person name="Vaughan O.R."/>
            <person name="Maksym K."/>
            <person name="Silva E."/>
            <person name="Barentsen K."/>
            <person name="Anthony R.V."/>
            <person name="Brown T.L."/>
            <person name="Hillman S.L."/>
            <person name="Spencer R."/>
            <person name="David A.L."/>
            <person name="Rosario F.J."/>
            <person name="Powell T.L."/>
            <person name="Jansson T."/>
        </authorList>
    </citation>
    <scope>DISRUPTION PHENOTYPE</scope>
    <scope>FUNCTION</scope>
</reference>
<gene>
    <name evidence="13" type="primary">Slc38a2</name>
    <name type="synonym">Ata2</name>
    <name type="synonym">Kiaa1382</name>
    <name type="synonym">Sat2</name>
    <name type="synonym">Snat2</name>
</gene>
<feature type="chain" id="PRO_0000311370" description="Sodium-coupled neutral amino acid symporter 2">
    <location>
        <begin position="1"/>
        <end position="504"/>
    </location>
</feature>
<feature type="topological domain" description="Cytoplasmic" evidence="3 4">
    <location>
        <begin position="1"/>
        <end position="76"/>
    </location>
</feature>
<feature type="transmembrane region" description="Helical" evidence="3 4">
    <location>
        <begin position="77"/>
        <end position="96"/>
    </location>
</feature>
<feature type="topological domain" description="Extracellular" evidence="3 4">
    <location>
        <begin position="97"/>
        <end position="102"/>
    </location>
</feature>
<feature type="transmembrane region" description="Helical" evidence="3 4">
    <location>
        <begin position="103"/>
        <end position="123"/>
    </location>
</feature>
<feature type="topological domain" description="Cytoplasmic" evidence="3 4">
    <location>
        <begin position="124"/>
        <end position="158"/>
    </location>
</feature>
<feature type="transmembrane region" description="Helical" evidence="3 4">
    <location>
        <begin position="159"/>
        <end position="177"/>
    </location>
</feature>
<feature type="topological domain" description="Extracellular" evidence="4">
    <location>
        <begin position="178"/>
        <end position="188"/>
    </location>
</feature>
<feature type="transmembrane region" description="Helical" evidence="3 4">
    <location>
        <begin position="189"/>
        <end position="209"/>
    </location>
</feature>
<feature type="topological domain" description="Cytoplasmic" evidence="3 4">
    <location>
        <begin position="210"/>
        <end position="217"/>
    </location>
</feature>
<feature type="transmembrane region" description="Helical" evidence="3 4">
    <location>
        <begin position="218"/>
        <end position="238"/>
    </location>
</feature>
<feature type="topological domain" description="Extracellular" evidence="3 4">
    <location>
        <begin position="239"/>
        <end position="289"/>
    </location>
</feature>
<feature type="transmembrane region" description="Helical" evidence="3 4">
    <location>
        <begin position="290"/>
        <end position="310"/>
    </location>
</feature>
<feature type="topological domain" description="Cytoplasmic" evidence="3 4">
    <location>
        <begin position="311"/>
        <end position="326"/>
    </location>
</feature>
<feature type="transmembrane region" description="Helical" evidence="4">
    <location>
        <begin position="327"/>
        <end position="347"/>
    </location>
</feature>
<feature type="topological domain" description="Extracellular" evidence="3 4">
    <location>
        <begin position="348"/>
        <end position="368"/>
    </location>
</feature>
<feature type="transmembrane region" description="Helical" evidence="4">
    <location>
        <begin position="369"/>
        <end position="389"/>
    </location>
</feature>
<feature type="topological domain" description="Cytoplasmic" evidence="3 4">
    <location>
        <begin position="390"/>
        <end position="410"/>
    </location>
</feature>
<feature type="transmembrane region" description="Helical" evidence="4">
    <location>
        <begin position="411"/>
        <end position="431"/>
    </location>
</feature>
<feature type="topological domain" description="Extracellular" evidence="3 4">
    <location>
        <begin position="432"/>
        <end position="433"/>
    </location>
</feature>
<feature type="transmembrane region" description="Helical" evidence="3 4">
    <location>
        <begin position="434"/>
        <end position="454"/>
    </location>
</feature>
<feature type="topological domain" description="Cytoplasmic" evidence="3 4">
    <location>
        <begin position="455"/>
        <end position="469"/>
    </location>
</feature>
<feature type="transmembrane region" description="Helical" evidence="3 4">
    <location>
        <begin position="470"/>
        <end position="492"/>
    </location>
</feature>
<feature type="topological domain" description="Extracellular" evidence="3 4">
    <location>
        <begin position="493"/>
        <end position="504"/>
    </location>
</feature>
<feature type="region of interest" description="Regulates protein turnover upon amino acid deprivation" evidence="1">
    <location>
        <begin position="1"/>
        <end position="96"/>
    </location>
</feature>
<feature type="region of interest" description="Disordered" evidence="6">
    <location>
        <begin position="1"/>
        <end position="23"/>
    </location>
</feature>
<feature type="binding site" evidence="3">
    <location>
        <position position="82"/>
    </location>
    <ligand>
        <name>Na(+)</name>
        <dbReference type="ChEBI" id="CHEBI:29101"/>
    </ligand>
</feature>
<feature type="binding site" evidence="3">
    <location>
        <position position="383"/>
    </location>
    <ligand>
        <name>Na(+)</name>
        <dbReference type="ChEBI" id="CHEBI:29101"/>
    </ligand>
</feature>
<feature type="modified residue" description="Phosphoserine" evidence="2">
    <location>
        <position position="12"/>
    </location>
</feature>
<feature type="modified residue" description="Phosphoserine" evidence="15">
    <location>
        <position position="21"/>
    </location>
</feature>
<feature type="modified residue" description="Phosphoserine" evidence="2">
    <location>
        <position position="22"/>
    </location>
</feature>
<feature type="modified residue" description="Phosphoserine" evidence="14">
    <location>
        <position position="55"/>
    </location>
</feature>
<feature type="glycosylation site" description="N-linked (GlcNAc...) asparagine" evidence="4">
    <location>
        <position position="254"/>
    </location>
</feature>
<feature type="glycosylation site" description="N-linked (GlcNAc...) asparagine" evidence="4">
    <location>
        <position position="258"/>
    </location>
</feature>
<feature type="disulfide bond" evidence="5">
    <location>
        <begin position="245"/>
        <end position="278"/>
    </location>
</feature>
<feature type="sequence conflict" description="In Ref. 2; BAC27479." evidence="12" ref="2">
    <original>C</original>
    <variation>R</variation>
    <location>
        <position position="245"/>
    </location>
</feature>
<dbReference type="EMBL" id="AK129342">
    <property type="protein sequence ID" value="BAC98152.1"/>
    <property type="status" value="ALT_INIT"/>
    <property type="molecule type" value="mRNA"/>
</dbReference>
<dbReference type="EMBL" id="AK031615">
    <property type="protein sequence ID" value="BAC27479.1"/>
    <property type="molecule type" value="mRNA"/>
</dbReference>
<dbReference type="EMBL" id="AK033812">
    <property type="protein sequence ID" value="BAC28483.1"/>
    <property type="molecule type" value="mRNA"/>
</dbReference>
<dbReference type="EMBL" id="AK169378">
    <property type="protein sequence ID" value="BAE41125.1"/>
    <property type="molecule type" value="mRNA"/>
</dbReference>
<dbReference type="EMBL" id="BC041108">
    <property type="protein sequence ID" value="AAH41108.1"/>
    <property type="molecule type" value="mRNA"/>
</dbReference>
<dbReference type="EMBL" id="BC048178">
    <property type="protein sequence ID" value="AAH48178.1"/>
    <property type="molecule type" value="mRNA"/>
</dbReference>
<dbReference type="EMBL" id="BC049271">
    <property type="protein sequence ID" value="AAH49271.1"/>
    <property type="molecule type" value="mRNA"/>
</dbReference>
<dbReference type="EMBL" id="BC057454">
    <property type="protein sequence ID" value="AAH57454.1"/>
    <property type="molecule type" value="mRNA"/>
</dbReference>
<dbReference type="CCDS" id="CCDS27778.1"/>
<dbReference type="RefSeq" id="NP_780330.2">
    <property type="nucleotide sequence ID" value="NM_175121.3"/>
</dbReference>
<dbReference type="RefSeq" id="XP_036015447.1">
    <property type="nucleotide sequence ID" value="XM_036159554.1"/>
</dbReference>
<dbReference type="SMR" id="Q8CFE6"/>
<dbReference type="BioGRID" id="212424">
    <property type="interactions" value="2"/>
</dbReference>
<dbReference type="FunCoup" id="Q8CFE6">
    <property type="interactions" value="888"/>
</dbReference>
<dbReference type="IntAct" id="Q8CFE6">
    <property type="interactions" value="1"/>
</dbReference>
<dbReference type="MINT" id="Q8CFE6"/>
<dbReference type="STRING" id="10090.ENSMUSP00000023099"/>
<dbReference type="GlyCosmos" id="Q8CFE6">
    <property type="glycosylation" value="2 sites, No reported glycans"/>
</dbReference>
<dbReference type="GlyGen" id="Q8CFE6">
    <property type="glycosylation" value="3 sites, 1 N-linked glycan (1 site)"/>
</dbReference>
<dbReference type="iPTMnet" id="Q8CFE6"/>
<dbReference type="PhosphoSitePlus" id="Q8CFE6"/>
<dbReference type="SwissPalm" id="Q8CFE6"/>
<dbReference type="PaxDb" id="10090-ENSMUSP00000023099"/>
<dbReference type="PeptideAtlas" id="Q8CFE6"/>
<dbReference type="ProteomicsDB" id="256571"/>
<dbReference type="Pumba" id="Q8CFE6"/>
<dbReference type="Antibodypedia" id="13370">
    <property type="antibodies" value="133 antibodies from 24 providers"/>
</dbReference>
<dbReference type="DNASU" id="67760"/>
<dbReference type="Ensembl" id="ENSMUST00000023099.8">
    <property type="protein sequence ID" value="ENSMUSP00000023099.7"/>
    <property type="gene ID" value="ENSMUSG00000022462.8"/>
</dbReference>
<dbReference type="GeneID" id="67760"/>
<dbReference type="KEGG" id="mmu:67760"/>
<dbReference type="UCSC" id="uc007xkm.1">
    <property type="organism name" value="mouse"/>
</dbReference>
<dbReference type="AGR" id="MGI:1915010"/>
<dbReference type="CTD" id="54407"/>
<dbReference type="MGI" id="MGI:1915010">
    <property type="gene designation" value="Slc38a2"/>
</dbReference>
<dbReference type="VEuPathDB" id="HostDB:ENSMUSG00000022462"/>
<dbReference type="eggNOG" id="KOG1305">
    <property type="taxonomic scope" value="Eukaryota"/>
</dbReference>
<dbReference type="GeneTree" id="ENSGT00940000155486"/>
<dbReference type="HOGENOM" id="CLU_009020_0_1_1"/>
<dbReference type="InParanoid" id="Q8CFE6"/>
<dbReference type="OMA" id="DSIHHQR"/>
<dbReference type="OrthoDB" id="655540at2759"/>
<dbReference type="PhylomeDB" id="Q8CFE6"/>
<dbReference type="TreeFam" id="TF328787"/>
<dbReference type="Reactome" id="R-MMU-210500">
    <property type="pathway name" value="Glutamate Neurotransmitter Release Cycle"/>
</dbReference>
<dbReference type="Reactome" id="R-MMU-352230">
    <property type="pathway name" value="Amino acid transport across the plasma membrane"/>
</dbReference>
<dbReference type="BioGRID-ORCS" id="67760">
    <property type="hits" value="23 hits in 81 CRISPR screens"/>
</dbReference>
<dbReference type="ChiTaRS" id="Slc38a2">
    <property type="organism name" value="mouse"/>
</dbReference>
<dbReference type="PRO" id="PR:Q8CFE6"/>
<dbReference type="Proteomes" id="UP000000589">
    <property type="component" value="Chromosome 15"/>
</dbReference>
<dbReference type="RNAct" id="Q8CFE6">
    <property type="molecule type" value="protein"/>
</dbReference>
<dbReference type="Bgee" id="ENSMUSG00000022462">
    <property type="expression patterns" value="Expressed in ureteric bud tip and 276 other cell types or tissues"/>
</dbReference>
<dbReference type="GO" id="GO:0030424">
    <property type="term" value="C:axon"/>
    <property type="evidence" value="ECO:0007669"/>
    <property type="project" value="Ensembl"/>
</dbReference>
<dbReference type="GO" id="GO:0005903">
    <property type="term" value="C:brush border"/>
    <property type="evidence" value="ECO:0007669"/>
    <property type="project" value="Ensembl"/>
</dbReference>
<dbReference type="GO" id="GO:0005737">
    <property type="term" value="C:cytoplasm"/>
    <property type="evidence" value="ECO:0007669"/>
    <property type="project" value="Ensembl"/>
</dbReference>
<dbReference type="GO" id="GO:0030425">
    <property type="term" value="C:dendrite"/>
    <property type="evidence" value="ECO:0007669"/>
    <property type="project" value="Ensembl"/>
</dbReference>
<dbReference type="GO" id="GO:0043025">
    <property type="term" value="C:neuronal cell body"/>
    <property type="evidence" value="ECO:0007669"/>
    <property type="project" value="Ensembl"/>
</dbReference>
<dbReference type="GO" id="GO:0005886">
    <property type="term" value="C:plasma membrane"/>
    <property type="evidence" value="ECO:0000314"/>
    <property type="project" value="UniProtKB"/>
</dbReference>
<dbReference type="GO" id="GO:0042383">
    <property type="term" value="C:sarcolemma"/>
    <property type="evidence" value="ECO:0007669"/>
    <property type="project" value="Ensembl"/>
</dbReference>
<dbReference type="GO" id="GO:0015172">
    <property type="term" value="F:acidic amino acid transmembrane transporter activity"/>
    <property type="evidence" value="ECO:0000250"/>
    <property type="project" value="UniProtKB"/>
</dbReference>
<dbReference type="GO" id="GO:0015655">
    <property type="term" value="F:alanine:sodium symporter activity"/>
    <property type="evidence" value="ECO:0000250"/>
    <property type="project" value="UniProtKB"/>
</dbReference>
<dbReference type="GO" id="GO:0015171">
    <property type="term" value="F:amino acid transmembrane transporter activity"/>
    <property type="evidence" value="ECO:0000314"/>
    <property type="project" value="MGI"/>
</dbReference>
<dbReference type="GO" id="GO:0005283">
    <property type="term" value="F:amino acid:sodium symporter activity"/>
    <property type="evidence" value="ECO:0000250"/>
    <property type="project" value="UniProtKB"/>
</dbReference>
<dbReference type="GO" id="GO:0015186">
    <property type="term" value="F:L-glutamine transmembrane transporter activity"/>
    <property type="evidence" value="ECO:0000314"/>
    <property type="project" value="UniProtKB"/>
</dbReference>
<dbReference type="GO" id="GO:0015194">
    <property type="term" value="F:L-serine transmembrane transporter activity"/>
    <property type="evidence" value="ECO:0007669"/>
    <property type="project" value="Ensembl"/>
</dbReference>
<dbReference type="GO" id="GO:0015175">
    <property type="term" value="F:neutral L-amino acid transmembrane transporter activity"/>
    <property type="evidence" value="ECO:0000315"/>
    <property type="project" value="UniProtKB"/>
</dbReference>
<dbReference type="GO" id="GO:0005295">
    <property type="term" value="F:neutral L-amino acid:sodium symporter activity"/>
    <property type="evidence" value="ECO:0000250"/>
    <property type="project" value="UniProtKB"/>
</dbReference>
<dbReference type="GO" id="GO:0005298">
    <property type="term" value="F:proline:sodium symporter activity"/>
    <property type="evidence" value="ECO:0000250"/>
    <property type="project" value="UniProtKB"/>
</dbReference>
<dbReference type="GO" id="GO:0032328">
    <property type="term" value="P:alanine transport"/>
    <property type="evidence" value="ECO:0000250"/>
    <property type="project" value="UniProtKB"/>
</dbReference>
<dbReference type="GO" id="GO:0043090">
    <property type="term" value="P:amino acid import"/>
    <property type="evidence" value="ECO:0000250"/>
    <property type="project" value="UniProtKB"/>
</dbReference>
<dbReference type="GO" id="GO:0006865">
    <property type="term" value="P:amino acid transport"/>
    <property type="evidence" value="ECO:0000314"/>
    <property type="project" value="MGI"/>
</dbReference>
<dbReference type="GO" id="GO:0034198">
    <property type="term" value="P:cellular response to amino acid starvation"/>
    <property type="evidence" value="ECO:0007669"/>
    <property type="project" value="Ensembl"/>
</dbReference>
<dbReference type="GO" id="GO:1903841">
    <property type="term" value="P:cellular response to arsenite(3-)"/>
    <property type="evidence" value="ECO:0007669"/>
    <property type="project" value="Ensembl"/>
</dbReference>
<dbReference type="GO" id="GO:0071260">
    <property type="term" value="P:cellular response to mechanical stimulus"/>
    <property type="evidence" value="ECO:0007669"/>
    <property type="project" value="Ensembl"/>
</dbReference>
<dbReference type="GO" id="GO:0021987">
    <property type="term" value="P:cerebral cortex development"/>
    <property type="evidence" value="ECO:0007669"/>
    <property type="project" value="Ensembl"/>
</dbReference>
<dbReference type="GO" id="GO:0007565">
    <property type="term" value="P:female pregnancy"/>
    <property type="evidence" value="ECO:0007669"/>
    <property type="project" value="Ensembl"/>
</dbReference>
<dbReference type="GO" id="GO:0006868">
    <property type="term" value="P:glutamine transport"/>
    <property type="evidence" value="ECO:0000314"/>
    <property type="project" value="UniProtKB"/>
</dbReference>
<dbReference type="GO" id="GO:0031460">
    <property type="term" value="P:glycine betaine transport"/>
    <property type="evidence" value="ECO:0007669"/>
    <property type="project" value="Ensembl"/>
</dbReference>
<dbReference type="GO" id="GO:1903803">
    <property type="term" value="P:L-glutamine import across plasma membrane"/>
    <property type="evidence" value="ECO:0000250"/>
    <property type="project" value="UniProtKB"/>
</dbReference>
<dbReference type="GO" id="GO:1904271">
    <property type="term" value="P:L-proline import across plasma membrane"/>
    <property type="evidence" value="ECO:0000250"/>
    <property type="project" value="UniProtKB"/>
</dbReference>
<dbReference type="GO" id="GO:1903812">
    <property type="term" value="P:L-serine import across plasma membrane"/>
    <property type="evidence" value="ECO:0000250"/>
    <property type="project" value="UniProtKB"/>
</dbReference>
<dbReference type="GO" id="GO:0033120">
    <property type="term" value="P:positive regulation of RNA splicing"/>
    <property type="evidence" value="ECO:0007669"/>
    <property type="project" value="Ensembl"/>
</dbReference>
<dbReference type="GO" id="GO:0015824">
    <property type="term" value="P:proline transport"/>
    <property type="evidence" value="ECO:0000315"/>
    <property type="project" value="UniProtKB"/>
</dbReference>
<dbReference type="GO" id="GO:0080135">
    <property type="term" value="P:regulation of cellular response to stress"/>
    <property type="evidence" value="ECO:0007669"/>
    <property type="project" value="Ensembl"/>
</dbReference>
<dbReference type="GO" id="GO:1903294">
    <property type="term" value="P:regulation of glutamate secretion, neurotransmission"/>
    <property type="evidence" value="ECO:0000250"/>
    <property type="project" value="UniProtKB"/>
</dbReference>
<dbReference type="GO" id="GO:0014850">
    <property type="term" value="P:response to muscle activity"/>
    <property type="evidence" value="ECO:0007669"/>
    <property type="project" value="Ensembl"/>
</dbReference>
<dbReference type="InterPro" id="IPR013057">
    <property type="entry name" value="AA_transpt_TM"/>
</dbReference>
<dbReference type="PANTHER" id="PTHR22950">
    <property type="entry name" value="AMINO ACID TRANSPORTER"/>
    <property type="match status" value="1"/>
</dbReference>
<dbReference type="PANTHER" id="PTHR22950:SF207">
    <property type="entry name" value="SODIUM-COUPLED NEUTRAL AMINO ACID SYMPORTER 2"/>
    <property type="match status" value="1"/>
</dbReference>
<dbReference type="Pfam" id="PF01490">
    <property type="entry name" value="Aa_trans"/>
    <property type="match status" value="1"/>
</dbReference>
<organism>
    <name type="scientific">Mus musculus</name>
    <name type="common">Mouse</name>
    <dbReference type="NCBI Taxonomy" id="10090"/>
    <lineage>
        <taxon>Eukaryota</taxon>
        <taxon>Metazoa</taxon>
        <taxon>Chordata</taxon>
        <taxon>Craniata</taxon>
        <taxon>Vertebrata</taxon>
        <taxon>Euteleostomi</taxon>
        <taxon>Mammalia</taxon>
        <taxon>Eutheria</taxon>
        <taxon>Euarchontoglires</taxon>
        <taxon>Glires</taxon>
        <taxon>Rodentia</taxon>
        <taxon>Myomorpha</taxon>
        <taxon>Muroidea</taxon>
        <taxon>Muridae</taxon>
        <taxon>Murinae</taxon>
        <taxon>Mus</taxon>
        <taxon>Mus</taxon>
    </lineage>
</organism>
<protein>
    <recommendedName>
        <fullName evidence="12">Sodium-coupled neutral amino acid symporter 2</fullName>
    </recommendedName>
    <alternativeName>
        <fullName>Amino acid transporter A2</fullName>
    </alternativeName>
    <alternativeName>
        <fullName>Solute carrier family 38 member 2</fullName>
    </alternativeName>
    <alternativeName>
        <fullName>System A amino acid transporter 2</fullName>
    </alternativeName>
    <alternativeName>
        <fullName>System A transporter 1</fullName>
    </alternativeName>
    <alternativeName>
        <fullName>System N amino acid transporter 2</fullName>
    </alternativeName>
</protein>
<sequence length="504" mass="55503">MKKTEMGRFNISPDEDSSSYSSNSDFNYSYPTKQAALKSHYADVDPENQNFLLESNLGKKKYETDFHPGTTSFGMSVFNLSNAIVGSGILGLSYAMANTGIALFIILLTFVSIFSLYSVHLLLKTANEGGSLLYEQLGHKAYGLAGKLAASGSITMQNIGAMSSYLFIVKYELPLVIKALMNIEDTNGLWYLNGDYLVLLVSLVLILPLSLLRNLGYLGYTSGLSLLCMIFFLIVVICKKFQIPCPVEAALVANETVNGTFTQAALALAFNSTADDACRPRYFIFNSQTVYAVPILTFSFVCHPAVLPIYEELKSRSRRRMMNVSKISFFAMFLMYLLAALFGYLTFYGHVESELLHTYSEIVGTDILLLVVRLAVLVAVTLTVPVVIFPIRSSVTHLLCPTKEFSWLRHSIITVTILSFTNLLVIFVPTIRDIFGFIGASAAAMLIFILPSAFYIKLVKKEPMRSVQKIGALCFLLSGIVVMIGSMGLIVLDWVHDASAAGGH</sequence>
<name>S38A2_MOUSE</name>
<proteinExistence type="evidence at protein level"/>